<accession>Q9FKS8</accession>
<accession>O24405</accession>
<accession>Q3E8J8</accession>
<comment type="function">
    <text evidence="2 3 4 5">Amino acid-proton symporter. Transporter with a broad specificity for histidine, lysine, glutamic acid, alanine, serine, proline and glycine. Involved in both apoplastic transport of amino acids in leaves and their uptake by roots.</text>
</comment>
<comment type="activity regulation">
    <text evidence="2 5">Inhibited by carbonlycyanide m-chlorophenylhydrazone (CCCP) and DEPC.</text>
</comment>
<comment type="biophysicochemical properties">
    <kinetics>
        <KM evidence="2 5">175 uM for lysine</KM>
        <KM evidence="2 5">11 mM for leucine</KM>
        <KM evidence="2 5">10 uM for proline</KM>
        <KM evidence="2 5">14 uM for glutamic acid</KM>
        <KM evidence="2 5">360 uM for histidine</KM>
        <Vmax evidence="2 5">80.0 nmol/min/g enzyme toward proline</Vmax>
        <Vmax evidence="2 5">100.0 nmol/min/g enzyme toward glutamic acid</Vmax>
        <Vmax evidence="2 5">105.0 nmol/min/g enzyme toward histidine</Vmax>
    </kinetics>
</comment>
<comment type="subcellular location">
    <subcellularLocation>
        <location evidence="2">Cell membrane</location>
        <topology evidence="2">Multi-pass membrane protein</topology>
    </subcellularLocation>
</comment>
<comment type="alternative products">
    <event type="alternative splicing"/>
    <isoform>
        <id>Q9FKS8-1</id>
        <name>1</name>
        <sequence type="displayed"/>
    </isoform>
    <isoform>
        <id>Q9FKS8-2</id>
        <name>2</name>
        <sequence type="described" ref="VSP_038321"/>
    </isoform>
</comment>
<comment type="tissue specificity">
    <text evidence="2 5">Expressed in roots, stems, flowers, leaves, siliques and pollen. Found in the tips of roots and in the rhizodermis of emerging roots and in lateral roots. Higher expression in older leaves as compared to joung leaves. Detected first at the hydathodes, then in the epidermis and finally in matures leaves in all mesophyll cells. Not detected in vascular bundles or in seeds.</text>
</comment>
<comment type="induction">
    <text evidence="2">By amino acids.</text>
</comment>
<comment type="disruption phenotype">
    <text evidence="2 3 4">Lower biomass at the time of harvest, but no visible phenotype until bolting. Decreased uptake of L-histidine, L-glutamine, glutamic acid, L-serine, glycine, L-asparagine, aspartic acid, L-proline and L- or D-alanine.</text>
</comment>
<comment type="similarity">
    <text evidence="6">Belongs to the amino acid/polyamine transporter 2 family. Amino acid/auxin permease (AAAP) (TC 2.A.18.2) subfamily.</text>
</comment>
<comment type="caution">
    <text evidence="6">PubMed:9390441 shows a high affinity for lysine while PubMed:16816136 and PubMed:17293438 found no significant transport of this amino acid.</text>
</comment>
<comment type="sequence caution" evidence="6">
    <conflict type="frameshift">
        <sequence resource="EMBL-CDS" id="AAC49885"/>
    </conflict>
</comment>
<evidence type="ECO:0000255" key="1"/>
<evidence type="ECO:0000269" key="2">
    <source>
    </source>
</evidence>
<evidence type="ECO:0000269" key="3">
    <source>
    </source>
</evidence>
<evidence type="ECO:0000269" key="4">
    <source>
    </source>
</evidence>
<evidence type="ECO:0000269" key="5">
    <source>
    </source>
</evidence>
<evidence type="ECO:0000305" key="6"/>
<sequence length="446" mass="49814">MVAQAPHDDHQDDEKLAAARQKEIEDWLPITSSRNAKWWYSAFHNVTAMVGAGVLGLPYAMSQLGWGPGIAVLVLSWVITLYTLWQMVEMHEMVPGKRFDRYHELGQHAFGEKLGLYIVVPQQLIVEIGVCIVYMVTGGKSLKKFHELVCDDCKPIKLTYFIMIFASVHFVLSHLPNFNSISGVSLAAAVMSLSYSTIAWASSASKGVQEDVQYGYKAKTTAGTVFNFFSGLGDVAFAYAGHNVVLEIQATIPSTPEKPSKGPMWRGVIVAYIVVALCYFPVALVGYYIFGNGVEDNILMSLKKPAWLIATANIFVVIHVIGSYQIYAMPVFDMMETLLVKKLNFRPTTTLRFFVRNFYVAATMFVGMTFPFFGGLLAFFGGFAFAPTTYFLPCVIWLAIYKPKKYSLSWWANWVCIVFGLFLMVLSPIGGLRTIVIQAKGYKFYS</sequence>
<gene>
    <name type="primary">LHT1</name>
    <name type="ordered locus">At5g40780</name>
    <name type="ORF">K1B16.3</name>
</gene>
<protein>
    <recommendedName>
        <fullName>Lysine histidine transporter 1</fullName>
    </recommendedName>
</protein>
<organism>
    <name type="scientific">Arabidopsis thaliana</name>
    <name type="common">Mouse-ear cress</name>
    <dbReference type="NCBI Taxonomy" id="3702"/>
    <lineage>
        <taxon>Eukaryota</taxon>
        <taxon>Viridiplantae</taxon>
        <taxon>Streptophyta</taxon>
        <taxon>Embryophyta</taxon>
        <taxon>Tracheophyta</taxon>
        <taxon>Spermatophyta</taxon>
        <taxon>Magnoliopsida</taxon>
        <taxon>eudicotyledons</taxon>
        <taxon>Gunneridae</taxon>
        <taxon>Pentapetalae</taxon>
        <taxon>rosids</taxon>
        <taxon>malvids</taxon>
        <taxon>Brassicales</taxon>
        <taxon>Brassicaceae</taxon>
        <taxon>Camelineae</taxon>
        <taxon>Arabidopsis</taxon>
    </lineage>
</organism>
<proteinExistence type="evidence at protein level"/>
<feature type="chain" id="PRO_0000387969" description="Lysine histidine transporter 1">
    <location>
        <begin position="1"/>
        <end position="446"/>
    </location>
</feature>
<feature type="topological domain" description="Cytoplasmic" evidence="1">
    <location>
        <begin position="1"/>
        <end position="37"/>
    </location>
</feature>
<feature type="transmembrane region" description="Helical" evidence="1">
    <location>
        <begin position="38"/>
        <end position="58"/>
    </location>
</feature>
<feature type="topological domain" description="Extracellular" evidence="1">
    <location>
        <begin position="59"/>
        <end position="63"/>
    </location>
</feature>
<feature type="transmembrane region" description="Helical" evidence="1">
    <location>
        <begin position="64"/>
        <end position="84"/>
    </location>
</feature>
<feature type="topological domain" description="Cytoplasmic" evidence="1">
    <location>
        <begin position="85"/>
        <end position="115"/>
    </location>
</feature>
<feature type="transmembrane region" description="Helical" evidence="1">
    <location>
        <begin position="116"/>
        <end position="136"/>
    </location>
</feature>
<feature type="topological domain" description="Extracellular" evidence="1">
    <location>
        <begin position="137"/>
        <end position="157"/>
    </location>
</feature>
<feature type="transmembrane region" description="Helical" evidence="1">
    <location>
        <begin position="158"/>
        <end position="178"/>
    </location>
</feature>
<feature type="topological domain" description="Cytoplasmic" evidence="1">
    <location>
        <begin position="179"/>
        <end position="180"/>
    </location>
</feature>
<feature type="transmembrane region" description="Helical" evidence="1">
    <location>
        <begin position="181"/>
        <end position="201"/>
    </location>
</feature>
<feature type="topological domain" description="Extracellular" evidence="1">
    <location>
        <begin position="202"/>
        <end position="227"/>
    </location>
</feature>
<feature type="transmembrane region" description="Helical" evidence="1">
    <location>
        <begin position="228"/>
        <end position="248"/>
    </location>
</feature>
<feature type="topological domain" description="Cytoplasmic" evidence="1">
    <location>
        <begin position="249"/>
        <end position="268"/>
    </location>
</feature>
<feature type="transmembrane region" description="Helical" evidence="1">
    <location>
        <begin position="269"/>
        <end position="289"/>
    </location>
</feature>
<feature type="topological domain" description="Extracellular" evidence="1">
    <location>
        <begin position="290"/>
        <end position="305"/>
    </location>
</feature>
<feature type="transmembrane region" description="Helical" evidence="1">
    <location>
        <begin position="306"/>
        <end position="326"/>
    </location>
</feature>
<feature type="topological domain" description="Cytoplasmic" evidence="1">
    <location>
        <begin position="327"/>
        <end position="352"/>
    </location>
</feature>
<feature type="transmembrane region" description="Helical" evidence="1">
    <location>
        <begin position="353"/>
        <end position="375"/>
    </location>
</feature>
<feature type="topological domain" description="Extracellular" evidence="1">
    <location>
        <begin position="376"/>
        <end position="378"/>
    </location>
</feature>
<feature type="transmembrane region" description="Helical" evidence="1">
    <location>
        <begin position="379"/>
        <end position="401"/>
    </location>
</feature>
<feature type="topological domain" description="Cytoplasmic" evidence="1">
    <location>
        <begin position="402"/>
        <end position="409"/>
    </location>
</feature>
<feature type="transmembrane region" description="Helical" evidence="1">
    <location>
        <begin position="410"/>
        <end position="430"/>
    </location>
</feature>
<feature type="topological domain" description="Extracellular" evidence="1">
    <location>
        <begin position="431"/>
        <end position="446"/>
    </location>
</feature>
<feature type="splice variant" id="VSP_038321" description="In isoform 2." evidence="6">
    <location>
        <position position="11"/>
    </location>
</feature>
<dbReference type="EMBL" id="U39782">
    <property type="protein sequence ID" value="AAC49885.1"/>
    <property type="status" value="ALT_FRAME"/>
    <property type="molecule type" value="mRNA"/>
</dbReference>
<dbReference type="EMBL" id="AB011477">
    <property type="protein sequence ID" value="BAB11340.1"/>
    <property type="molecule type" value="Genomic_DNA"/>
</dbReference>
<dbReference type="EMBL" id="AB015470">
    <property type="protein sequence ID" value="BAB11340.1"/>
    <property type="status" value="JOINED"/>
    <property type="molecule type" value="Genomic_DNA"/>
</dbReference>
<dbReference type="EMBL" id="CP002688">
    <property type="protein sequence ID" value="AED94593.1"/>
    <property type="molecule type" value="Genomic_DNA"/>
</dbReference>
<dbReference type="EMBL" id="AF367281">
    <property type="protein sequence ID" value="AAK56270.1"/>
    <property type="molecule type" value="mRNA"/>
</dbReference>
<dbReference type="EMBL" id="AY133550">
    <property type="protein sequence ID" value="AAM91380.1"/>
    <property type="molecule type" value="mRNA"/>
</dbReference>
<dbReference type="RefSeq" id="NP_851109.1">
    <molecule id="Q9FKS8-1"/>
    <property type="nucleotide sequence ID" value="NM_180778.4"/>
</dbReference>
<dbReference type="SMR" id="Q9FKS8"/>
<dbReference type="BioGRID" id="19329">
    <property type="interactions" value="4"/>
</dbReference>
<dbReference type="FunCoup" id="Q9FKS8">
    <property type="interactions" value="176"/>
</dbReference>
<dbReference type="IntAct" id="Q9FKS8">
    <property type="interactions" value="2"/>
</dbReference>
<dbReference type="STRING" id="3702.Q9FKS8"/>
<dbReference type="TCDB" id="2.A.18.2.2">
    <property type="family name" value="the amino acid/auxin permease (aaap) family"/>
</dbReference>
<dbReference type="PaxDb" id="3702-AT5G40780.1"/>
<dbReference type="ProteomicsDB" id="238467">
    <molecule id="Q9FKS8-1"/>
</dbReference>
<dbReference type="EnsemblPlants" id="AT5G40780.1">
    <molecule id="Q9FKS8-1"/>
    <property type="protein sequence ID" value="AT5G40780.1"/>
    <property type="gene ID" value="AT5G40780"/>
</dbReference>
<dbReference type="GeneID" id="834078"/>
<dbReference type="Gramene" id="AT5G40780.1">
    <molecule id="Q9FKS8-1"/>
    <property type="protein sequence ID" value="AT5G40780.1"/>
    <property type="gene ID" value="AT5G40780"/>
</dbReference>
<dbReference type="KEGG" id="ath:AT5G40780"/>
<dbReference type="Araport" id="AT5G40780"/>
<dbReference type="TAIR" id="AT5G40780">
    <property type="gene designation" value="LHT1"/>
</dbReference>
<dbReference type="eggNOG" id="KOG1303">
    <property type="taxonomic scope" value="Eukaryota"/>
</dbReference>
<dbReference type="InParanoid" id="Q9FKS8"/>
<dbReference type="OMA" id="CESCKQI"/>
<dbReference type="OrthoDB" id="40134at2759"/>
<dbReference type="PhylomeDB" id="Q9FKS8"/>
<dbReference type="SABIO-RK" id="Q9FKS8"/>
<dbReference type="PRO" id="PR:Q9FKS8"/>
<dbReference type="Proteomes" id="UP000006548">
    <property type="component" value="Chromosome 5"/>
</dbReference>
<dbReference type="ExpressionAtlas" id="Q9FKS8">
    <property type="expression patterns" value="baseline and differential"/>
</dbReference>
<dbReference type="GO" id="GO:0005886">
    <property type="term" value="C:plasma membrane"/>
    <property type="evidence" value="ECO:0007669"/>
    <property type="project" value="UniProtKB-SubCell"/>
</dbReference>
<dbReference type="GO" id="GO:0009536">
    <property type="term" value="C:plastid"/>
    <property type="evidence" value="ECO:0007005"/>
    <property type="project" value="TAIR"/>
</dbReference>
<dbReference type="GO" id="GO:0015171">
    <property type="term" value="F:amino acid transmembrane transporter activity"/>
    <property type="evidence" value="ECO:0000315"/>
    <property type="project" value="TAIR"/>
</dbReference>
<dbReference type="GO" id="GO:0015293">
    <property type="term" value="F:symporter activity"/>
    <property type="evidence" value="ECO:0007669"/>
    <property type="project" value="UniProtKB-KW"/>
</dbReference>
<dbReference type="GO" id="GO:0043090">
    <property type="term" value="P:amino acid import"/>
    <property type="evidence" value="ECO:0000315"/>
    <property type="project" value="TAIR"/>
</dbReference>
<dbReference type="GO" id="GO:0006952">
    <property type="term" value="P:defense response"/>
    <property type="evidence" value="ECO:0000270"/>
    <property type="project" value="TAIR"/>
</dbReference>
<dbReference type="FunFam" id="1.20.1740.10:FF:000033">
    <property type="entry name" value="Lysine histidine transporter 1"/>
    <property type="match status" value="1"/>
</dbReference>
<dbReference type="Gene3D" id="1.20.1740.10">
    <property type="entry name" value="Amino acid/polyamine transporter I"/>
    <property type="match status" value="1"/>
</dbReference>
<dbReference type="InterPro" id="IPR013057">
    <property type="entry name" value="AA_transpt_TM"/>
</dbReference>
<dbReference type="PANTHER" id="PTHR48017">
    <property type="entry name" value="OS05G0424000 PROTEIN-RELATED"/>
    <property type="match status" value="1"/>
</dbReference>
<dbReference type="Pfam" id="PF01490">
    <property type="entry name" value="Aa_trans"/>
    <property type="match status" value="1"/>
</dbReference>
<keyword id="KW-0025">Alternative splicing</keyword>
<keyword id="KW-0029">Amino-acid transport</keyword>
<keyword id="KW-1003">Cell membrane</keyword>
<keyword id="KW-0472">Membrane</keyword>
<keyword id="KW-1185">Reference proteome</keyword>
<keyword id="KW-0769">Symport</keyword>
<keyword id="KW-0812">Transmembrane</keyword>
<keyword id="KW-1133">Transmembrane helix</keyword>
<keyword id="KW-0813">Transport</keyword>
<name>LHT1_ARATH</name>
<reference key="1">
    <citation type="journal article" date="1997" name="Plant Physiol.">
        <title>LHT1, a lysine- and histidine-specific amino acid transporter in arabidopsis.</title>
        <authorList>
            <person name="Chen L."/>
            <person name="Bush D.R."/>
        </authorList>
    </citation>
    <scope>NUCLEOTIDE SEQUENCE [MRNA] (ISOFORM 1)</scope>
    <scope>FUNCTION</scope>
    <scope>TISSUE SPECIFICITY</scope>
    <scope>ACTIVITY REGULATION</scope>
    <scope>BIOPHYSICOCHEMICAL PROPERTIES</scope>
</reference>
<reference key="2">
    <citation type="journal article" date="1998" name="DNA Res.">
        <title>Structural analysis of Arabidopsis thaliana chromosome 5. V. Sequence features of the regions of 1,381,565 bp covered by twenty one physically assigned P1 and TAC clones.</title>
        <authorList>
            <person name="Kaneko T."/>
            <person name="Kotani H."/>
            <person name="Nakamura Y."/>
            <person name="Sato S."/>
            <person name="Asamizu E."/>
            <person name="Miyajima N."/>
            <person name="Tabata S."/>
        </authorList>
    </citation>
    <scope>NUCLEOTIDE SEQUENCE [LARGE SCALE GENOMIC DNA]</scope>
    <source>
        <strain>cv. Columbia</strain>
    </source>
</reference>
<reference key="3">
    <citation type="journal article" date="1998" name="DNA Res.">
        <title>Structural analysis of Arabidopsis thaliana chromosome 5. VII. Sequence features of the regions of 1,013,767 bp covered by sixteen physically assigned P1 and TAC clones.</title>
        <authorList>
            <person name="Nakamura Y."/>
            <person name="Sato S."/>
            <person name="Asamizu E."/>
            <person name="Kaneko T."/>
            <person name="Kotani H."/>
            <person name="Miyajima N."/>
            <person name="Tabata S."/>
        </authorList>
    </citation>
    <scope>NUCLEOTIDE SEQUENCE [LARGE SCALE GENOMIC DNA]</scope>
    <source>
        <strain>cv. Columbia</strain>
    </source>
</reference>
<reference key="4">
    <citation type="journal article" date="2017" name="Plant J.">
        <title>Araport11: a complete reannotation of the Arabidopsis thaliana reference genome.</title>
        <authorList>
            <person name="Cheng C.Y."/>
            <person name="Krishnakumar V."/>
            <person name="Chan A.P."/>
            <person name="Thibaud-Nissen F."/>
            <person name="Schobel S."/>
            <person name="Town C.D."/>
        </authorList>
    </citation>
    <scope>GENOME REANNOTATION</scope>
    <source>
        <strain>cv. Columbia</strain>
    </source>
</reference>
<reference key="5">
    <citation type="journal article" date="2003" name="Science">
        <title>Empirical analysis of transcriptional activity in the Arabidopsis genome.</title>
        <authorList>
            <person name="Yamada K."/>
            <person name="Lim J."/>
            <person name="Dale J.M."/>
            <person name="Chen H."/>
            <person name="Shinn P."/>
            <person name="Palm C.J."/>
            <person name="Southwick A.M."/>
            <person name="Wu H.C."/>
            <person name="Kim C.J."/>
            <person name="Nguyen M."/>
            <person name="Pham P.K."/>
            <person name="Cheuk R.F."/>
            <person name="Karlin-Newmann G."/>
            <person name="Liu S.X."/>
            <person name="Lam B."/>
            <person name="Sakano H."/>
            <person name="Wu T."/>
            <person name="Yu G."/>
            <person name="Miranda M."/>
            <person name="Quach H.L."/>
            <person name="Tripp M."/>
            <person name="Chang C.H."/>
            <person name="Lee J.M."/>
            <person name="Toriumi M.J."/>
            <person name="Chan M.M."/>
            <person name="Tang C.C."/>
            <person name="Onodera C.S."/>
            <person name="Deng J.M."/>
            <person name="Akiyama K."/>
            <person name="Ansari Y."/>
            <person name="Arakawa T."/>
            <person name="Banh J."/>
            <person name="Banno F."/>
            <person name="Bowser L."/>
            <person name="Brooks S.Y."/>
            <person name="Carninci P."/>
            <person name="Chao Q."/>
            <person name="Choy N."/>
            <person name="Enju A."/>
            <person name="Goldsmith A.D."/>
            <person name="Gurjal M."/>
            <person name="Hansen N.F."/>
            <person name="Hayashizaki Y."/>
            <person name="Johnson-Hopson C."/>
            <person name="Hsuan V.W."/>
            <person name="Iida K."/>
            <person name="Karnes M."/>
            <person name="Khan S."/>
            <person name="Koesema E."/>
            <person name="Ishida J."/>
            <person name="Jiang P.X."/>
            <person name="Jones T."/>
            <person name="Kawai J."/>
            <person name="Kamiya A."/>
            <person name="Meyers C."/>
            <person name="Nakajima M."/>
            <person name="Narusaka M."/>
            <person name="Seki M."/>
            <person name="Sakurai T."/>
            <person name="Satou M."/>
            <person name="Tamse R."/>
            <person name="Vaysberg M."/>
            <person name="Wallender E.K."/>
            <person name="Wong C."/>
            <person name="Yamamura Y."/>
            <person name="Yuan S."/>
            <person name="Shinozaki K."/>
            <person name="Davis R.W."/>
            <person name="Theologis A."/>
            <person name="Ecker J.R."/>
        </authorList>
    </citation>
    <scope>NUCLEOTIDE SEQUENCE [LARGE SCALE MRNA] (ISOFORM 1)</scope>
    <source>
        <strain>cv. Columbia</strain>
    </source>
</reference>
<reference key="6">
    <citation type="journal article" date="2004" name="Plant J.">
        <title>Selective expression of a novel high-affinity transport system for acidic and neutral amino acids in the tapetum cells of Arabidopsis flowers.</title>
        <authorList>
            <person name="Lee Y.-H."/>
            <person name="Tegeder M."/>
        </authorList>
    </citation>
    <scope>GENE FAMILY</scope>
    <source>
        <strain>cv. C24</strain>
    </source>
</reference>
<reference key="7">
    <citation type="journal article" date="2006" name="Plant Cell">
        <title>Arabidopsis LHT1 is a high-affinity transporter for cellular amino acid uptake in both root epidermis and leaf mesophyll.</title>
        <authorList>
            <person name="Hirner A."/>
            <person name="Ladwig F."/>
            <person name="Stransky H."/>
            <person name="Okumoto S."/>
            <person name="Keinath M."/>
            <person name="Harms A."/>
            <person name="Frommer W.B."/>
            <person name="Koch W."/>
        </authorList>
    </citation>
    <scope>FUNCTION</scope>
    <scope>BIOPHYSICOCHEMICAL PROPERTIES</scope>
    <scope>INDUCTION</scope>
    <scope>ACTIVITY REGULATION</scope>
    <scope>TISSUE SPECIFICITY</scope>
    <scope>SUBCELLULAR LOCATION</scope>
    <scope>DISRUPTION PHENOTYPE</scope>
</reference>
<reference key="8">
    <citation type="journal article" date="2007" name="Plant Physiol.">
        <title>Comprehensive screening of Arabidopsis mutants suggests the lysine histidine transporter 1 to be involved in plant uptake of amino acids.</title>
        <authorList>
            <person name="Svennerstam H."/>
            <person name="Ganeteg U."/>
            <person name="Bellini C."/>
            <person name="Naesholm T."/>
        </authorList>
    </citation>
    <scope>FUNCTION</scope>
    <scope>DISRUPTION PHENOTYPE</scope>
</reference>
<reference key="9">
    <citation type="journal article" date="2008" name="New Phytol.">
        <title>Root uptake of cationic amino acids by Arabidopsis depends on functional expression of amino acid permease 5.</title>
        <authorList>
            <person name="Svennerstam H."/>
            <person name="Ganeteg U."/>
            <person name="Naesholm T."/>
        </authorList>
    </citation>
    <scope>FUNCTION</scope>
    <scope>DISRUPTION PHENOTYPE</scope>
</reference>